<sequence>MFIFNLNKKESKMNEDRIKGQWKQLAGKIKERYGIAHDEARKQVKKFHDSL</sequence>
<accession>Q82XW4</accession>
<comment type="similarity">
    <text evidence="1">Belongs to the UPF0337 (CsbD) family.</text>
</comment>
<gene>
    <name type="ordered locus">NE0131</name>
</gene>
<proteinExistence type="inferred from homology"/>
<protein>
    <recommendedName>
        <fullName>UPF0337 protein NE0131</fullName>
    </recommendedName>
</protein>
<reference key="1">
    <citation type="journal article" date="2003" name="J. Bacteriol.">
        <title>Complete genome sequence of the ammonia-oxidizing bacterium and obligate chemolithoautotroph Nitrosomonas europaea.</title>
        <authorList>
            <person name="Chain P."/>
            <person name="Lamerdin J.E."/>
            <person name="Larimer F.W."/>
            <person name="Regala W."/>
            <person name="Lao V."/>
            <person name="Land M.L."/>
            <person name="Hauser L."/>
            <person name="Hooper A.B."/>
            <person name="Klotz M.G."/>
            <person name="Norton J."/>
            <person name="Sayavedra-Soto L.A."/>
            <person name="Arciero D.M."/>
            <person name="Hommes N.G."/>
            <person name="Whittaker M.M."/>
            <person name="Arp D.J."/>
        </authorList>
    </citation>
    <scope>NUCLEOTIDE SEQUENCE [LARGE SCALE GENOMIC DNA]</scope>
    <source>
        <strain>ATCC 19718 / CIP 103999 / KCTC 2705 / NBRC 14298</strain>
    </source>
</reference>
<dbReference type="EMBL" id="AL954747">
    <property type="protein sequence ID" value="CAD84042.1"/>
    <property type="molecule type" value="Genomic_DNA"/>
</dbReference>
<dbReference type="SMR" id="Q82XW4"/>
<dbReference type="STRING" id="228410.NE0131"/>
<dbReference type="KEGG" id="neu:NE0131"/>
<dbReference type="HOGENOM" id="CLU_3101389_0_0_4"/>
<dbReference type="Proteomes" id="UP000001416">
    <property type="component" value="Chromosome"/>
</dbReference>
<dbReference type="Gene3D" id="1.10.1470.10">
    <property type="entry name" value="YjbJ"/>
    <property type="match status" value="1"/>
</dbReference>
<dbReference type="InterPro" id="IPR036629">
    <property type="entry name" value="YjbJ_sf"/>
</dbReference>
<dbReference type="SUPFAM" id="SSF69047">
    <property type="entry name" value="Hypothetical protein YjbJ"/>
    <property type="match status" value="1"/>
</dbReference>
<evidence type="ECO:0000305" key="1"/>
<organism>
    <name type="scientific">Nitrosomonas europaea (strain ATCC 19718 / CIP 103999 / KCTC 2705 / NBRC 14298)</name>
    <dbReference type="NCBI Taxonomy" id="228410"/>
    <lineage>
        <taxon>Bacteria</taxon>
        <taxon>Pseudomonadati</taxon>
        <taxon>Pseudomonadota</taxon>
        <taxon>Betaproteobacteria</taxon>
        <taxon>Nitrosomonadales</taxon>
        <taxon>Nitrosomonadaceae</taxon>
        <taxon>Nitrosomonas</taxon>
    </lineage>
</organism>
<name>Y131_NITEU</name>
<feature type="chain" id="PRO_0000210011" description="UPF0337 protein NE0131">
    <location>
        <begin position="1"/>
        <end position="51"/>
    </location>
</feature>
<keyword id="KW-1185">Reference proteome</keyword>